<comment type="function">
    <text evidence="1">May play a role in an as yet undefined retina-specific signal transduction. Could bind to photoactivated-phosphorylated red/green opsins (By similarity).</text>
</comment>
<comment type="subunit">
    <text evidence="2 4">Homodimer; disulfide-linked in response to retinal illumination (By similarity). Interacts with CXCR4; the interaction is dependent on the C-terminal phosphorylation of CXCR4 and modulates the calcium ion mobilization activity of CXCR4 (By similarity). Interacts with GPR84 (By similarity).</text>
</comment>
<comment type="subcellular location">
    <subcellularLocation>
        <location evidence="3">Photoreceptor inner segment</location>
    </subcellularLocation>
    <subcellularLocation>
        <location evidence="3">Cell projection</location>
        <location evidence="3">Cilium</location>
        <location evidence="3">Photoreceptor outer segment</location>
    </subcellularLocation>
</comment>
<comment type="similarity">
    <text evidence="6">Belongs to the arrestin family.</text>
</comment>
<comment type="sequence caution" evidence="6">
    <conflict type="erroneous initiation">
        <sequence resource="EMBL-CDS" id="CAD92082"/>
    </conflict>
</comment>
<evidence type="ECO:0000250" key="1"/>
<evidence type="ECO:0000250" key="2">
    <source>
        <dbReference type="UniProtKB" id="P36575"/>
    </source>
</evidence>
<evidence type="ECO:0000250" key="3">
    <source>
        <dbReference type="UniProtKB" id="Q9EQP6"/>
    </source>
</evidence>
<evidence type="ECO:0000250" key="4">
    <source>
        <dbReference type="UniProtKB" id="Q9N0H5"/>
    </source>
</evidence>
<evidence type="ECO:0000256" key="5">
    <source>
        <dbReference type="SAM" id="MobiDB-lite"/>
    </source>
</evidence>
<evidence type="ECO:0000305" key="6"/>
<protein>
    <recommendedName>
        <fullName>Arrestin-C</fullName>
    </recommendedName>
    <alternativeName>
        <fullName>Cone arrestin</fullName>
        <shortName>cArr</shortName>
    </alternativeName>
    <alternativeName>
        <fullName>Retinal cone arrestin-3</fullName>
    </alternativeName>
</protein>
<dbReference type="EMBL" id="AJ564496">
    <property type="protein sequence ID" value="CAD92082.1"/>
    <property type="status" value="ALT_INIT"/>
    <property type="molecule type" value="mRNA"/>
</dbReference>
<dbReference type="RefSeq" id="NP_999510.1">
    <property type="nucleotide sequence ID" value="NM_214345.1"/>
</dbReference>
<dbReference type="SMR" id="Q7YS78"/>
<dbReference type="FunCoup" id="Q7YS78">
    <property type="interactions" value="288"/>
</dbReference>
<dbReference type="STRING" id="9823.ENSSSCP00000066915"/>
<dbReference type="PaxDb" id="9823-ENSSSCP00000013174"/>
<dbReference type="PeptideAtlas" id="Q7YS78"/>
<dbReference type="Ensembl" id="ENSSSCT00000083551.2">
    <property type="protein sequence ID" value="ENSSSCP00000062826.2"/>
    <property type="gene ID" value="ENSSSCG00000012379.6"/>
</dbReference>
<dbReference type="Ensembl" id="ENSSSCT00085014430">
    <property type="protein sequence ID" value="ENSSSCP00085010396"/>
    <property type="gene ID" value="ENSSSCG00085007548"/>
</dbReference>
<dbReference type="Ensembl" id="ENSSSCT00090009619">
    <property type="protein sequence ID" value="ENSSSCP00090005834"/>
    <property type="gene ID" value="ENSSSCG00090005480"/>
</dbReference>
<dbReference type="Ensembl" id="ENSSSCT00105033607">
    <property type="protein sequence ID" value="ENSSSCP00105023461"/>
    <property type="gene ID" value="ENSSSCG00105017413"/>
</dbReference>
<dbReference type="Ensembl" id="ENSSSCT00115002054">
    <property type="protein sequence ID" value="ENSSSCP00115001912"/>
    <property type="gene ID" value="ENSSSCG00115001214"/>
</dbReference>
<dbReference type="Ensembl" id="ENSSSCT00130050052">
    <property type="protein sequence ID" value="ENSSSCP00130035601"/>
    <property type="gene ID" value="ENSSSCG00130025657"/>
</dbReference>
<dbReference type="GeneID" id="397622"/>
<dbReference type="KEGG" id="ssc:397622"/>
<dbReference type="CTD" id="407"/>
<dbReference type="VGNC" id="VGNC:109464">
    <property type="gene designation" value="ARR3"/>
</dbReference>
<dbReference type="eggNOG" id="KOG3865">
    <property type="taxonomic scope" value="Eukaryota"/>
</dbReference>
<dbReference type="GeneTree" id="ENSGT00950000182887"/>
<dbReference type="HOGENOM" id="CLU_033484_1_1_1"/>
<dbReference type="InParanoid" id="Q7YS78"/>
<dbReference type="OrthoDB" id="298939at2759"/>
<dbReference type="TreeFam" id="TF314260"/>
<dbReference type="Proteomes" id="UP000008227">
    <property type="component" value="Chromosome X"/>
</dbReference>
<dbReference type="Proteomes" id="UP000314985">
    <property type="component" value="Unplaced"/>
</dbReference>
<dbReference type="Proteomes" id="UP000694570">
    <property type="component" value="Unplaced"/>
</dbReference>
<dbReference type="Proteomes" id="UP000694571">
    <property type="component" value="Unplaced"/>
</dbReference>
<dbReference type="Proteomes" id="UP000694720">
    <property type="component" value="Unplaced"/>
</dbReference>
<dbReference type="Proteomes" id="UP000694722">
    <property type="component" value="Unplaced"/>
</dbReference>
<dbReference type="Proteomes" id="UP000694723">
    <property type="component" value="Unplaced"/>
</dbReference>
<dbReference type="Proteomes" id="UP000694724">
    <property type="component" value="Unplaced"/>
</dbReference>
<dbReference type="Proteomes" id="UP000694725">
    <property type="component" value="Unplaced"/>
</dbReference>
<dbReference type="Proteomes" id="UP000694726">
    <property type="component" value="Unplaced"/>
</dbReference>
<dbReference type="Proteomes" id="UP000694727">
    <property type="component" value="Unplaced"/>
</dbReference>
<dbReference type="Proteomes" id="UP000694728">
    <property type="component" value="Unplaced"/>
</dbReference>
<dbReference type="GO" id="GO:0001917">
    <property type="term" value="C:photoreceptor inner segment"/>
    <property type="evidence" value="ECO:0007669"/>
    <property type="project" value="UniProtKB-SubCell"/>
</dbReference>
<dbReference type="GO" id="GO:0001750">
    <property type="term" value="C:photoreceptor outer segment"/>
    <property type="evidence" value="ECO:0007669"/>
    <property type="project" value="UniProtKB-SubCell"/>
</dbReference>
<dbReference type="GO" id="GO:0045202">
    <property type="term" value="C:synapse"/>
    <property type="evidence" value="ECO:0007669"/>
    <property type="project" value="Ensembl"/>
</dbReference>
<dbReference type="GO" id="GO:0002046">
    <property type="term" value="F:opsin binding"/>
    <property type="evidence" value="ECO:0007669"/>
    <property type="project" value="Ensembl"/>
</dbReference>
<dbReference type="GO" id="GO:0051219">
    <property type="term" value="F:phosphoprotein binding"/>
    <property type="evidence" value="ECO:0007669"/>
    <property type="project" value="Ensembl"/>
</dbReference>
<dbReference type="GO" id="GO:0006897">
    <property type="term" value="P:endocytosis"/>
    <property type="evidence" value="ECO:0007669"/>
    <property type="project" value="Ensembl"/>
</dbReference>
<dbReference type="GO" id="GO:0007165">
    <property type="term" value="P:signal transduction"/>
    <property type="evidence" value="ECO:0007669"/>
    <property type="project" value="InterPro"/>
</dbReference>
<dbReference type="GO" id="GO:0007601">
    <property type="term" value="P:visual perception"/>
    <property type="evidence" value="ECO:0007669"/>
    <property type="project" value="UniProtKB-KW"/>
</dbReference>
<dbReference type="FunFam" id="2.60.40.640:FF:000019">
    <property type="entry name" value="Arrestin 3"/>
    <property type="match status" value="1"/>
</dbReference>
<dbReference type="FunFam" id="2.60.40.840:FF:000002">
    <property type="entry name" value="Arrestin 3"/>
    <property type="match status" value="1"/>
</dbReference>
<dbReference type="Gene3D" id="2.60.40.640">
    <property type="match status" value="1"/>
</dbReference>
<dbReference type="Gene3D" id="2.60.40.840">
    <property type="match status" value="1"/>
</dbReference>
<dbReference type="InterPro" id="IPR000698">
    <property type="entry name" value="Arrestin"/>
</dbReference>
<dbReference type="InterPro" id="IPR014752">
    <property type="entry name" value="Arrestin-like_C"/>
</dbReference>
<dbReference type="InterPro" id="IPR011021">
    <property type="entry name" value="Arrestin-like_N"/>
</dbReference>
<dbReference type="InterPro" id="IPR011022">
    <property type="entry name" value="Arrestin_C-like"/>
</dbReference>
<dbReference type="InterPro" id="IPR017864">
    <property type="entry name" value="Arrestin_CS"/>
</dbReference>
<dbReference type="InterPro" id="IPR014753">
    <property type="entry name" value="Arrestin_N"/>
</dbReference>
<dbReference type="InterPro" id="IPR014756">
    <property type="entry name" value="Ig_E-set"/>
</dbReference>
<dbReference type="PANTHER" id="PTHR11792">
    <property type="entry name" value="ARRESTIN"/>
    <property type="match status" value="1"/>
</dbReference>
<dbReference type="PANTHER" id="PTHR11792:SF19">
    <property type="entry name" value="ARRESTIN-C"/>
    <property type="match status" value="1"/>
</dbReference>
<dbReference type="Pfam" id="PF02752">
    <property type="entry name" value="Arrestin_C"/>
    <property type="match status" value="1"/>
</dbReference>
<dbReference type="Pfam" id="PF00339">
    <property type="entry name" value="Arrestin_N"/>
    <property type="match status" value="1"/>
</dbReference>
<dbReference type="PRINTS" id="PR00309">
    <property type="entry name" value="ARRESTIN"/>
</dbReference>
<dbReference type="SMART" id="SM01017">
    <property type="entry name" value="Arrestin_C"/>
    <property type="match status" value="1"/>
</dbReference>
<dbReference type="SUPFAM" id="SSF81296">
    <property type="entry name" value="E set domains"/>
    <property type="match status" value="2"/>
</dbReference>
<dbReference type="PROSITE" id="PS00295">
    <property type="entry name" value="ARRESTINS"/>
    <property type="match status" value="1"/>
</dbReference>
<reference key="1">
    <citation type="journal article" date="2005" name="Invest. Ophthalmol. Vis. Sci.">
        <title>Purification of mammalian cone photoreceptors by lectin panning and the enhancement of their survival in glia-conditioned medium.</title>
        <authorList>
            <person name="Balse E."/>
            <person name="Tessier L.H."/>
            <person name="Fuchs C."/>
            <person name="Forster V."/>
            <person name="Sahel J.A."/>
            <person name="Picaud S."/>
        </authorList>
    </citation>
    <scope>NUCLEOTIDE SEQUENCE [MRNA]</scope>
    <source>
        <tissue>Retina</tissue>
    </source>
</reference>
<proteinExistence type="evidence at transcript level"/>
<organism>
    <name type="scientific">Sus scrofa</name>
    <name type="common">Pig</name>
    <dbReference type="NCBI Taxonomy" id="9823"/>
    <lineage>
        <taxon>Eukaryota</taxon>
        <taxon>Metazoa</taxon>
        <taxon>Chordata</taxon>
        <taxon>Craniata</taxon>
        <taxon>Vertebrata</taxon>
        <taxon>Euteleostomi</taxon>
        <taxon>Mammalia</taxon>
        <taxon>Eutheria</taxon>
        <taxon>Laurasiatheria</taxon>
        <taxon>Artiodactyla</taxon>
        <taxon>Suina</taxon>
        <taxon>Suidae</taxon>
        <taxon>Sus</taxon>
    </lineage>
</organism>
<sequence>MSRVFKKTCSNGKLSIYLGKRDFVDHVDMVEPIDGVVLVDPEYLKGRKMFVMLTCAFRYGHDDLDVIGLTFRKDLYVQVQQVVPAEPTSPQVPLTVLQERLLHKLGDNAYPFNLQMVVNLPCSVTLQPGPDDTGKACGIDFEVKSFCAENLEEKVSKKDSVRLVIRKIQFAPVEPGPGPWAQTVRRFLLSAQPLQLQAWMDREVHYHGKPISVNVSINNSTNKVIKKIKISVDQITDVVLYSLDKYTKTVFIQEFTETIAANSTFSKSFEVTPLLADNCEKQGLALDGKLKHGDTNLASSTILRPGMDKELLGILVSYKVRVNLMVSCGGILGDLTASDVGVELPLILMHPKPSNEAASSEDIVIEEFARQEPGGREESQEALAAEGDEGS</sequence>
<feature type="chain" id="PRO_0000250487" description="Arrestin-C">
    <location>
        <begin position="1"/>
        <end position="391"/>
    </location>
</feature>
<feature type="region of interest" description="Disordered" evidence="5">
    <location>
        <begin position="369"/>
        <end position="391"/>
    </location>
</feature>
<feature type="compositionally biased region" description="Basic and acidic residues" evidence="5">
    <location>
        <begin position="369"/>
        <end position="379"/>
    </location>
</feature>
<accession>Q7YS78</accession>
<keyword id="KW-0966">Cell projection</keyword>
<keyword id="KW-1015">Disulfide bond</keyword>
<keyword id="KW-1185">Reference proteome</keyword>
<keyword id="KW-0716">Sensory transduction</keyword>
<keyword id="KW-0844">Vision</keyword>
<name>ARRC_PIG</name>
<gene>
    <name type="primary">ARR3</name>
</gene>